<gene>
    <name evidence="1" type="primary">aroB</name>
    <name type="ordered locus">YPN_3913</name>
    <name type="ORF">YP516_4443</name>
</gene>
<accession>Q1CCP0</accession>
<accession>D1Q2T0</accession>
<name>AROB_YERPN</name>
<comment type="function">
    <text evidence="1">Catalyzes the conversion of 3-deoxy-D-arabino-heptulosonate 7-phosphate (DAHP) to dehydroquinate (DHQ).</text>
</comment>
<comment type="catalytic activity">
    <reaction evidence="1">
        <text>7-phospho-2-dehydro-3-deoxy-D-arabino-heptonate = 3-dehydroquinate + phosphate</text>
        <dbReference type="Rhea" id="RHEA:21968"/>
        <dbReference type="ChEBI" id="CHEBI:32364"/>
        <dbReference type="ChEBI" id="CHEBI:43474"/>
        <dbReference type="ChEBI" id="CHEBI:58394"/>
        <dbReference type="EC" id="4.2.3.4"/>
    </reaction>
</comment>
<comment type="cofactor">
    <cofactor evidence="1">
        <name>Co(2+)</name>
        <dbReference type="ChEBI" id="CHEBI:48828"/>
    </cofactor>
    <cofactor evidence="1">
        <name>Zn(2+)</name>
        <dbReference type="ChEBI" id="CHEBI:29105"/>
    </cofactor>
    <text evidence="1">Binds 1 divalent metal cation per subunit. Can use either Co(2+) or Zn(2+).</text>
</comment>
<comment type="cofactor">
    <cofactor evidence="1">
        <name>NAD(+)</name>
        <dbReference type="ChEBI" id="CHEBI:57540"/>
    </cofactor>
</comment>
<comment type="pathway">
    <text evidence="1">Metabolic intermediate biosynthesis; chorismate biosynthesis; chorismate from D-erythrose 4-phosphate and phosphoenolpyruvate: step 2/7.</text>
</comment>
<comment type="subcellular location">
    <subcellularLocation>
        <location evidence="1">Cytoplasm</location>
    </subcellularLocation>
</comment>
<comment type="similarity">
    <text evidence="1">Belongs to the sugar phosphate cyclases superfamily. Dehydroquinate synthase family.</text>
</comment>
<proteinExistence type="inferred from homology"/>
<keyword id="KW-0028">Amino-acid biosynthesis</keyword>
<keyword id="KW-0057">Aromatic amino acid biosynthesis</keyword>
<keyword id="KW-0170">Cobalt</keyword>
<keyword id="KW-0963">Cytoplasm</keyword>
<keyword id="KW-0456">Lyase</keyword>
<keyword id="KW-0479">Metal-binding</keyword>
<keyword id="KW-0520">NAD</keyword>
<keyword id="KW-0547">Nucleotide-binding</keyword>
<keyword id="KW-0862">Zinc</keyword>
<evidence type="ECO:0000255" key="1">
    <source>
        <dbReference type="HAMAP-Rule" id="MF_00110"/>
    </source>
</evidence>
<reference key="1">
    <citation type="journal article" date="2006" name="J. Bacteriol.">
        <title>Complete genome sequence of Yersinia pestis strains Antiqua and Nepal516: evidence of gene reduction in an emerging pathogen.</title>
        <authorList>
            <person name="Chain P.S.G."/>
            <person name="Hu P."/>
            <person name="Malfatti S.A."/>
            <person name="Radnedge L."/>
            <person name="Larimer F."/>
            <person name="Vergez L.M."/>
            <person name="Worsham P."/>
            <person name="Chu M.C."/>
            <person name="Andersen G.L."/>
        </authorList>
    </citation>
    <scope>NUCLEOTIDE SEQUENCE [LARGE SCALE GENOMIC DNA]</scope>
    <source>
        <strain>Nepal516</strain>
    </source>
</reference>
<reference key="2">
    <citation type="submission" date="2009-04" db="EMBL/GenBank/DDBJ databases">
        <title>Yersinia pestis Nepal516A whole genome shotgun sequencing project.</title>
        <authorList>
            <person name="Plunkett G. III"/>
            <person name="Anderson B.D."/>
            <person name="Baumler D.J."/>
            <person name="Burland V."/>
            <person name="Cabot E.L."/>
            <person name="Glasner J.D."/>
            <person name="Mau B."/>
            <person name="Neeno-Eckwall E."/>
            <person name="Perna N.T."/>
            <person name="Munk A.C."/>
            <person name="Tapia R."/>
            <person name="Green L.D."/>
            <person name="Rogers Y.C."/>
            <person name="Detter J.C."/>
            <person name="Bruce D.C."/>
            <person name="Brettin T.S."/>
        </authorList>
    </citation>
    <scope>NUCLEOTIDE SEQUENCE [LARGE SCALE GENOMIC DNA]</scope>
    <source>
        <strain>Nepal516</strain>
    </source>
</reference>
<feature type="chain" id="PRO_1000094662" description="3-dehydroquinate synthase">
    <location>
        <begin position="1"/>
        <end position="362"/>
    </location>
</feature>
<feature type="binding site" evidence="1">
    <location>
        <begin position="71"/>
        <end position="76"/>
    </location>
    <ligand>
        <name>NAD(+)</name>
        <dbReference type="ChEBI" id="CHEBI:57540"/>
    </ligand>
</feature>
<feature type="binding site" evidence="1">
    <location>
        <begin position="105"/>
        <end position="109"/>
    </location>
    <ligand>
        <name>NAD(+)</name>
        <dbReference type="ChEBI" id="CHEBI:57540"/>
    </ligand>
</feature>
<feature type="binding site" evidence="1">
    <location>
        <begin position="129"/>
        <end position="130"/>
    </location>
    <ligand>
        <name>NAD(+)</name>
        <dbReference type="ChEBI" id="CHEBI:57540"/>
    </ligand>
</feature>
<feature type="binding site" evidence="1">
    <location>
        <position position="142"/>
    </location>
    <ligand>
        <name>NAD(+)</name>
        <dbReference type="ChEBI" id="CHEBI:57540"/>
    </ligand>
</feature>
<feature type="binding site" evidence="1">
    <location>
        <position position="151"/>
    </location>
    <ligand>
        <name>NAD(+)</name>
        <dbReference type="ChEBI" id="CHEBI:57540"/>
    </ligand>
</feature>
<feature type="binding site" evidence="1">
    <location>
        <begin position="169"/>
        <end position="172"/>
    </location>
    <ligand>
        <name>NAD(+)</name>
        <dbReference type="ChEBI" id="CHEBI:57540"/>
    </ligand>
</feature>
<feature type="binding site" evidence="1">
    <location>
        <position position="184"/>
    </location>
    <ligand>
        <name>Zn(2+)</name>
        <dbReference type="ChEBI" id="CHEBI:29105"/>
    </ligand>
</feature>
<feature type="binding site" evidence="1">
    <location>
        <position position="248"/>
    </location>
    <ligand>
        <name>Zn(2+)</name>
        <dbReference type="ChEBI" id="CHEBI:29105"/>
    </ligand>
</feature>
<feature type="binding site" evidence="1">
    <location>
        <position position="265"/>
    </location>
    <ligand>
        <name>Zn(2+)</name>
        <dbReference type="ChEBI" id="CHEBI:29105"/>
    </ligand>
</feature>
<organism>
    <name type="scientific">Yersinia pestis bv. Antiqua (strain Nepal516)</name>
    <dbReference type="NCBI Taxonomy" id="377628"/>
    <lineage>
        <taxon>Bacteria</taxon>
        <taxon>Pseudomonadati</taxon>
        <taxon>Pseudomonadota</taxon>
        <taxon>Gammaproteobacteria</taxon>
        <taxon>Enterobacterales</taxon>
        <taxon>Yersiniaceae</taxon>
        <taxon>Yersinia</taxon>
    </lineage>
</organism>
<protein>
    <recommendedName>
        <fullName evidence="1">3-dehydroquinate synthase</fullName>
        <shortName evidence="1">DHQS</shortName>
        <ecNumber evidence="1">4.2.3.4</ecNumber>
    </recommendedName>
</protein>
<sequence length="362" mass="38837">MEKITVTLGERSYPITIAAGLFNDPASFKPLKAGDQVMLVTNQTLAPLYLDSLRAVLEHGGIKVDQVILPDGEQYKSLSVMEQVFSALLEKPHGRDTTLVALGGGVVGDLTGFAAACYQRGVRFIQVPTTLLSQVDSSVGGKTAVNHPLGKNMIGAFYQPASVVVDLNCLKTLPPRELASGLAEVIKYGIILDAAFFDWLENNIDALLALDMSALAYCIRRCCELKADVVAADEREESGARALLNLGHTYGHAIEAEMGYGVWLHGEAVAAGMVMAAQTSRRLGQLSVSDVERIKKLLLRAGLPVCGPKEMAPESYLPHMMRDKKVLAGELRLVLPTAIGKSEIRGGVAHDMVLASIADCRP</sequence>
<dbReference type="EC" id="4.2.3.4" evidence="1"/>
<dbReference type="EMBL" id="CP000305">
    <property type="protein sequence ID" value="ABG20240.1"/>
    <property type="molecule type" value="Genomic_DNA"/>
</dbReference>
<dbReference type="EMBL" id="ACNQ01000019">
    <property type="protein sequence ID" value="EEO74833.1"/>
    <property type="molecule type" value="Genomic_DNA"/>
</dbReference>
<dbReference type="RefSeq" id="WP_002208898.1">
    <property type="nucleotide sequence ID" value="NZ_ACNQ01000019.1"/>
</dbReference>
<dbReference type="SMR" id="Q1CCP0"/>
<dbReference type="GeneID" id="57974449"/>
<dbReference type="KEGG" id="ypn:YPN_3913"/>
<dbReference type="HOGENOM" id="CLU_001201_0_2_6"/>
<dbReference type="UniPathway" id="UPA00053">
    <property type="reaction ID" value="UER00085"/>
</dbReference>
<dbReference type="Proteomes" id="UP000008936">
    <property type="component" value="Chromosome"/>
</dbReference>
<dbReference type="GO" id="GO:0005737">
    <property type="term" value="C:cytoplasm"/>
    <property type="evidence" value="ECO:0007669"/>
    <property type="project" value="UniProtKB-SubCell"/>
</dbReference>
<dbReference type="GO" id="GO:0003856">
    <property type="term" value="F:3-dehydroquinate synthase activity"/>
    <property type="evidence" value="ECO:0007669"/>
    <property type="project" value="UniProtKB-UniRule"/>
</dbReference>
<dbReference type="GO" id="GO:0046872">
    <property type="term" value="F:metal ion binding"/>
    <property type="evidence" value="ECO:0007669"/>
    <property type="project" value="UniProtKB-KW"/>
</dbReference>
<dbReference type="GO" id="GO:0000166">
    <property type="term" value="F:nucleotide binding"/>
    <property type="evidence" value="ECO:0007669"/>
    <property type="project" value="UniProtKB-KW"/>
</dbReference>
<dbReference type="GO" id="GO:0008652">
    <property type="term" value="P:amino acid biosynthetic process"/>
    <property type="evidence" value="ECO:0007669"/>
    <property type="project" value="UniProtKB-KW"/>
</dbReference>
<dbReference type="GO" id="GO:0009073">
    <property type="term" value="P:aromatic amino acid family biosynthetic process"/>
    <property type="evidence" value="ECO:0007669"/>
    <property type="project" value="UniProtKB-KW"/>
</dbReference>
<dbReference type="GO" id="GO:0009423">
    <property type="term" value="P:chorismate biosynthetic process"/>
    <property type="evidence" value="ECO:0007669"/>
    <property type="project" value="UniProtKB-UniRule"/>
</dbReference>
<dbReference type="CDD" id="cd08195">
    <property type="entry name" value="DHQS"/>
    <property type="match status" value="1"/>
</dbReference>
<dbReference type="FunFam" id="1.20.1090.10:FF:000002">
    <property type="entry name" value="3-dehydroquinate synthase"/>
    <property type="match status" value="1"/>
</dbReference>
<dbReference type="FunFam" id="3.40.50.1970:FF:000001">
    <property type="entry name" value="3-dehydroquinate synthase"/>
    <property type="match status" value="1"/>
</dbReference>
<dbReference type="Gene3D" id="3.40.50.1970">
    <property type="match status" value="1"/>
</dbReference>
<dbReference type="Gene3D" id="1.20.1090.10">
    <property type="entry name" value="Dehydroquinate synthase-like - alpha domain"/>
    <property type="match status" value="1"/>
</dbReference>
<dbReference type="HAMAP" id="MF_00110">
    <property type="entry name" value="DHQ_synthase"/>
    <property type="match status" value="1"/>
</dbReference>
<dbReference type="InterPro" id="IPR050071">
    <property type="entry name" value="Dehydroquinate_synthase"/>
</dbReference>
<dbReference type="InterPro" id="IPR016037">
    <property type="entry name" value="DHQ_synth_AroB"/>
</dbReference>
<dbReference type="InterPro" id="IPR030963">
    <property type="entry name" value="DHQ_synth_fam"/>
</dbReference>
<dbReference type="InterPro" id="IPR030960">
    <property type="entry name" value="DHQS/DOIS_N"/>
</dbReference>
<dbReference type="InterPro" id="IPR056179">
    <property type="entry name" value="DHQS_C"/>
</dbReference>
<dbReference type="NCBIfam" id="TIGR01357">
    <property type="entry name" value="aroB"/>
    <property type="match status" value="1"/>
</dbReference>
<dbReference type="PANTHER" id="PTHR43622">
    <property type="entry name" value="3-DEHYDROQUINATE SYNTHASE"/>
    <property type="match status" value="1"/>
</dbReference>
<dbReference type="PANTHER" id="PTHR43622:SF7">
    <property type="entry name" value="3-DEHYDROQUINATE SYNTHASE, CHLOROPLASTIC"/>
    <property type="match status" value="1"/>
</dbReference>
<dbReference type="Pfam" id="PF01761">
    <property type="entry name" value="DHQ_synthase"/>
    <property type="match status" value="1"/>
</dbReference>
<dbReference type="Pfam" id="PF24621">
    <property type="entry name" value="DHQS_C"/>
    <property type="match status" value="1"/>
</dbReference>
<dbReference type="PIRSF" id="PIRSF001455">
    <property type="entry name" value="DHQ_synth"/>
    <property type="match status" value="1"/>
</dbReference>
<dbReference type="SUPFAM" id="SSF56796">
    <property type="entry name" value="Dehydroquinate synthase-like"/>
    <property type="match status" value="1"/>
</dbReference>